<evidence type="ECO:0000255" key="1"/>
<evidence type="ECO:0000255" key="2">
    <source>
        <dbReference type="PROSITE-ProRule" id="PRU00457"/>
    </source>
</evidence>
<evidence type="ECO:0000256" key="3">
    <source>
        <dbReference type="SAM" id="MobiDB-lite"/>
    </source>
</evidence>
<dbReference type="EMBL" id="X52734">
    <property type="protein sequence ID" value="CAA36949.1"/>
    <property type="molecule type" value="Genomic_DNA"/>
</dbReference>
<dbReference type="PIR" id="S11780">
    <property type="entry name" value="S11780"/>
</dbReference>
<dbReference type="RefSeq" id="WP_000790705.1">
    <property type="nucleotide sequence ID" value="NZ_WKIW01000001.1"/>
</dbReference>
<dbReference type="RefSeq" id="YP_006938638.1">
    <property type="nucleotide sequence ID" value="NC_013347.1"/>
</dbReference>
<dbReference type="SMR" id="P18416"/>
<dbReference type="GeneID" id="93824211"/>
<dbReference type="OMA" id="RIGYHAL"/>
<dbReference type="GO" id="GO:0003677">
    <property type="term" value="F:DNA binding"/>
    <property type="evidence" value="ECO:0007669"/>
    <property type="project" value="UniProtKB-KW"/>
</dbReference>
<dbReference type="GO" id="GO:0015074">
    <property type="term" value="P:DNA integration"/>
    <property type="evidence" value="ECO:0007669"/>
    <property type="project" value="InterPro"/>
</dbReference>
<dbReference type="GO" id="GO:0006310">
    <property type="term" value="P:DNA recombination"/>
    <property type="evidence" value="ECO:0007669"/>
    <property type="project" value="UniProtKB-KW"/>
</dbReference>
<dbReference type="GO" id="GO:0032196">
    <property type="term" value="P:transposition"/>
    <property type="evidence" value="ECO:0007669"/>
    <property type="project" value="UniProtKB-KW"/>
</dbReference>
<dbReference type="Gene3D" id="3.30.420.10">
    <property type="entry name" value="Ribonuclease H-like superfamily/Ribonuclease H"/>
    <property type="match status" value="1"/>
</dbReference>
<dbReference type="Gene3D" id="2.30.30.130">
    <property type="entry name" value="Transposase, Mu, C-terminal"/>
    <property type="match status" value="1"/>
</dbReference>
<dbReference type="InterPro" id="IPR009057">
    <property type="entry name" value="Homeodomain-like_sf"/>
</dbReference>
<dbReference type="InterPro" id="IPR001584">
    <property type="entry name" value="Integrase_cat-core"/>
</dbReference>
<dbReference type="InterPro" id="IPR012337">
    <property type="entry name" value="RNaseH-like_sf"/>
</dbReference>
<dbReference type="InterPro" id="IPR036397">
    <property type="entry name" value="RNaseH_sf"/>
</dbReference>
<dbReference type="InterPro" id="IPR015378">
    <property type="entry name" value="Transposase-like_Mu_C"/>
</dbReference>
<dbReference type="InterPro" id="IPR009004">
    <property type="entry name" value="Transposase_Mu_C"/>
</dbReference>
<dbReference type="PANTHER" id="PTHR35004:SF6">
    <property type="entry name" value="TRANSPOSASE"/>
    <property type="match status" value="1"/>
</dbReference>
<dbReference type="PANTHER" id="PTHR35004">
    <property type="entry name" value="TRANSPOSASE RV3428C-RELATED"/>
    <property type="match status" value="1"/>
</dbReference>
<dbReference type="Pfam" id="PF09299">
    <property type="entry name" value="Mu-transpos_C"/>
    <property type="match status" value="1"/>
</dbReference>
<dbReference type="Pfam" id="PF00665">
    <property type="entry name" value="rve"/>
    <property type="match status" value="1"/>
</dbReference>
<dbReference type="SUPFAM" id="SSF46689">
    <property type="entry name" value="Homeodomain-like"/>
    <property type="match status" value="1"/>
</dbReference>
<dbReference type="SUPFAM" id="SSF50610">
    <property type="entry name" value="mu transposase, C-terminal domain"/>
    <property type="match status" value="1"/>
</dbReference>
<dbReference type="SUPFAM" id="SSF53098">
    <property type="entry name" value="Ribonuclease H-like"/>
    <property type="match status" value="1"/>
</dbReference>
<dbReference type="PROSITE" id="PS50994">
    <property type="entry name" value="INTEGRASE"/>
    <property type="match status" value="1"/>
</dbReference>
<organism>
    <name type="scientific">Staphylococcus aureus</name>
    <dbReference type="NCBI Taxonomy" id="1280"/>
    <lineage>
        <taxon>Bacteria</taxon>
        <taxon>Bacillati</taxon>
        <taxon>Bacillota</taxon>
        <taxon>Bacilli</taxon>
        <taxon>Bacillales</taxon>
        <taxon>Staphylococcaceae</taxon>
        <taxon>Staphylococcus</taxon>
    </lineage>
</organism>
<reference key="1">
    <citation type="journal article" date="1990" name="Mol. Microbiol.">
        <title>Tn552, a novel transposable element from Staphylococcus aureus.</title>
        <authorList>
            <person name="Rowland S.J."/>
            <person name="Dyke K.G.H."/>
        </authorList>
    </citation>
    <scope>NUCLEOTIDE SEQUENCE [GENOMIC DNA]</scope>
    <source>
        <strain>NCTC 9789 / PS80</strain>
        <transposon>Tn552</transposon>
    </source>
</reference>
<keyword id="KW-0233">DNA recombination</keyword>
<keyword id="KW-0238">DNA-binding</keyword>
<keyword id="KW-0814">Transposable element</keyword>
<keyword id="KW-0815">Transposition</keyword>
<feature type="chain" id="PRO_0000065594" description="Transposase for transposon Tn552">
    <location>
        <begin position="1"/>
        <end position="480"/>
    </location>
</feature>
<feature type="domain" description="Integrase catalytic" evidence="2">
    <location>
        <begin position="155"/>
        <end position="341"/>
    </location>
</feature>
<feature type="DNA-binding region" description="H-T-H motif" evidence="1">
    <location>
        <begin position="36"/>
        <end position="55"/>
    </location>
</feature>
<feature type="region of interest" description="Disordered" evidence="3">
    <location>
        <begin position="438"/>
        <end position="480"/>
    </location>
</feature>
<feature type="compositionally biased region" description="Basic residues" evidence="3">
    <location>
        <begin position="470"/>
        <end position="480"/>
    </location>
</feature>
<accession>P18416</accession>
<name>TRA3_STAAU</name>
<sequence>MKNKEKYLTNFSEAKRKEATQKYNIIKPFILGKQSLSSISKSKGIALSTLYRWNKLYKEQGLTGLIHNTRVDKGEHKLKQNIIDEIKRLALKNKRNSIATIHRKIANYCIENNFYKPSYKQVYSIIKAMPKSVIDFSHQGEKYYQNKYDLIQIRESSRPNEIWQADHTLLDIYILDQKGNINRPWLTIIMDDYSRAIAGYFISFDAPNAQNTALTLHQAIWNKNNTNWPVCGIPEKFYTDHGSDFTSHHMEQVAIDLKINLMFSKVGVPRGRGKIERFFQTVNQTFLEQLPGYINNNDTSSDLIDFQNFEEKLRYFLIEDYNQKEHSAIQSTPINRWNSNHFFPNMPSSLEQLDLLLLEIPKSRKIHSDGIHFQGFRYSNTNLTAYVGEYVLIRYNPNDMAEIRVFYRDEFLCTAISPDLADYSIDIKEIQHARSQRRKHLKQNIASPSTTDLIKEEKSYGYSPQETTKNVKKLKRYRND</sequence>
<protein>
    <recommendedName>
        <fullName>Transposase for transposon Tn552</fullName>
    </recommendedName>
    <alternativeName>
        <fullName>ORF 480</fullName>
    </alternativeName>
</protein>
<proteinExistence type="predicted"/>